<organism>
    <name type="scientific">Homo sapiens</name>
    <name type="common">Human</name>
    <dbReference type="NCBI Taxonomy" id="9606"/>
    <lineage>
        <taxon>Eukaryota</taxon>
        <taxon>Metazoa</taxon>
        <taxon>Chordata</taxon>
        <taxon>Craniata</taxon>
        <taxon>Vertebrata</taxon>
        <taxon>Euteleostomi</taxon>
        <taxon>Mammalia</taxon>
        <taxon>Eutheria</taxon>
        <taxon>Euarchontoglires</taxon>
        <taxon>Primates</taxon>
        <taxon>Haplorrhini</taxon>
        <taxon>Catarrhini</taxon>
        <taxon>Hominidae</taxon>
        <taxon>Homo</taxon>
    </lineage>
</organism>
<evidence type="ECO:0000250" key="1"/>
<evidence type="ECO:0000255" key="2">
    <source>
        <dbReference type="PROSITE-ProRule" id="PRU01330"/>
    </source>
</evidence>
<evidence type="ECO:0000255" key="3">
    <source>
        <dbReference type="PROSITE-ProRule" id="PRU01331"/>
    </source>
</evidence>
<evidence type="ECO:0000256" key="4">
    <source>
        <dbReference type="SAM" id="MobiDB-lite"/>
    </source>
</evidence>
<evidence type="ECO:0000269" key="5">
    <source>
    </source>
</evidence>
<evidence type="ECO:0000269" key="6">
    <source>
    </source>
</evidence>
<evidence type="ECO:0000303" key="7">
    <source>
    </source>
</evidence>
<evidence type="ECO:0000305" key="8"/>
<feature type="chain" id="PRO_0000153282" description="Lengsin">
    <location>
        <begin position="1"/>
        <end position="509"/>
    </location>
</feature>
<feature type="domain" description="GS beta-grasp" evidence="2">
    <location>
        <begin position="83"/>
        <end position="177"/>
    </location>
</feature>
<feature type="domain" description="GS catalytic" evidence="3">
    <location>
        <begin position="184"/>
        <end position="509"/>
    </location>
</feature>
<feature type="region of interest" description="Disordered" evidence="4">
    <location>
        <begin position="1"/>
        <end position="34"/>
    </location>
</feature>
<feature type="splice variant" id="VSP_036480" description="In isoform 3." evidence="7">
    <original>DCMRDSSQILTPPQLSSRMKHIRQAMAKNRLQFVRFEATDLHGVSRSKTIPAHFFQEKVSHGVC</original>
    <variation>ERIRNQMVCHKLGNTSKPIMGPGSAESHLSYDDKDSQDETTVIKPLPPRTTTNVPGGEFNPNSE</variation>
    <location>
        <begin position="55"/>
        <end position="118"/>
    </location>
</feature>
<feature type="splice variant" id="VSP_036481" description="In isoform 3." evidence="7">
    <location>
        <begin position="119"/>
        <end position="509"/>
    </location>
</feature>
<feature type="splice variant" id="VSP_036482" description="In isoform 2." evidence="7">
    <original>GEPLLTSPRYIAKRQLSHLQASGFSLLSAFIY</original>
    <variation>VSGMSIGRKTCSAALLELSSSRSLGKNGWQDS</variation>
    <location>
        <begin position="177"/>
        <end position="208"/>
    </location>
</feature>
<feature type="splice variant" id="VSP_036483" description="In isoform 2." evidence="7">
    <location>
        <begin position="209"/>
        <end position="509"/>
    </location>
</feature>
<feature type="sequence variant" id="VAR_054552" description="In dbSNP:rs2459568.">
    <original>N</original>
    <variation>Y</variation>
    <location>
        <position position="26"/>
    </location>
</feature>
<feature type="sequence variant" id="VAR_054553" description="In dbSNP:rs35691434.">
    <original>G</original>
    <variation>E</variation>
    <location>
        <position position="46"/>
    </location>
</feature>
<feature type="sequence variant" id="VAR_054554" description="In dbSNP:rs6454127.">
    <original>N</original>
    <variation>H</variation>
    <location>
        <position position="137"/>
    </location>
</feature>
<feature type="sequence conflict" description="In Ref. 1; ABG75902." evidence="8" ref="1">
    <original>A</original>
    <variation>S</variation>
    <location>
        <position position="81"/>
    </location>
</feature>
<feature type="sequence conflict" description="In Ref. 2; AAF61255." evidence="8" ref="2">
    <original>L</original>
    <variation>Q</variation>
    <location>
        <position position="472"/>
    </location>
</feature>
<sequence length="509" mass="57278">MNNEEDLLQEDSTRDEGNETEANSMNTLRRTRKKVTKPYVCSTEVGETDMSNSNDCMRDSSQILTPPQLSSRMKHIRQAMAKNRLQFVRFEATDLHGVSRSKTIPAHFFQEKVSHGVCMPRGYLEVIPNPKDNEMNNIRATCFNSDIVLMPELSTFRVLPWADRTARVICDTFTVTGEPLLTSPRYIAKRQLSHLQASGFSLLSAFIYDFCIFGVPEILNSKIISFPALTFLNNHDQPFMQELVDGLYHTGANVESFSSSTRPGQMEISFLPEFGISSADNAFTLRTGVKEVARKYNYIASFFIETGFCDSGILSHSLWDVDRKKNMFCSTSGTEQLTITGKKWLAGLLKHSAALSCLMAPSVSCRKRYSKDRKDLKKSVPTTWGYNDNSCIFNIKCHGEKGTRIENKLGSATANPYLVLAATVAAGLDGLHSSNEVLAGPDESTDFYQVEPSEIPLKLEDALVALEEDQCLRQALGETFIRYFVAMKKYELENEEIAAERNKFLEYFI</sequence>
<proteinExistence type="evidence at protein level"/>
<gene>
    <name type="primary">LGSN</name>
    <name type="synonym">GLULD1</name>
    <name type="synonym">LGS</name>
</gene>
<dbReference type="EMBL" id="DQ682605">
    <property type="protein sequence ID" value="ABG75902.1"/>
    <property type="molecule type" value="mRNA"/>
</dbReference>
<dbReference type="EMBL" id="DQ682606">
    <property type="protein sequence ID" value="ABG75903.1"/>
    <property type="molecule type" value="mRNA"/>
</dbReference>
<dbReference type="EMBL" id="AF242388">
    <property type="protein sequence ID" value="AAF61255.1"/>
    <property type="molecule type" value="mRNA"/>
</dbReference>
<dbReference type="EMBL" id="AL121949">
    <property type="status" value="NOT_ANNOTATED_CDS"/>
    <property type="molecule type" value="Genomic_DNA"/>
</dbReference>
<dbReference type="EMBL" id="AL590456">
    <property type="status" value="NOT_ANNOTATED_CDS"/>
    <property type="molecule type" value="Genomic_DNA"/>
</dbReference>
<dbReference type="EMBL" id="CH471143">
    <property type="protein sequence ID" value="EAW88493.1"/>
    <property type="molecule type" value="Genomic_DNA"/>
</dbReference>
<dbReference type="EMBL" id="BC130366">
    <property type="protein sequence ID" value="AAI30367.1"/>
    <property type="molecule type" value="mRNA"/>
</dbReference>
<dbReference type="EMBL" id="BC130368">
    <property type="protein sequence ID" value="AAI30369.1"/>
    <property type="molecule type" value="mRNA"/>
</dbReference>
<dbReference type="CCDS" id="CCDS4964.1">
    <molecule id="Q5TDP6-1"/>
</dbReference>
<dbReference type="CCDS" id="CCDS55027.1">
    <molecule id="Q5TDP6-2"/>
</dbReference>
<dbReference type="RefSeq" id="NP_001137412.1">
    <molecule id="Q5TDP6-2"/>
    <property type="nucleotide sequence ID" value="NM_001143940.2"/>
</dbReference>
<dbReference type="RefSeq" id="NP_057655.2">
    <molecule id="Q5TDP6-1"/>
    <property type="nucleotide sequence ID" value="NM_016571.3"/>
</dbReference>
<dbReference type="SMR" id="Q5TDP6"/>
<dbReference type="BioGRID" id="119608">
    <property type="interactions" value="4"/>
</dbReference>
<dbReference type="FunCoup" id="Q5TDP6">
    <property type="interactions" value="97"/>
</dbReference>
<dbReference type="IntAct" id="Q5TDP6">
    <property type="interactions" value="2"/>
</dbReference>
<dbReference type="MINT" id="Q5TDP6"/>
<dbReference type="STRING" id="9606.ENSP00000359691"/>
<dbReference type="iPTMnet" id="Q5TDP6"/>
<dbReference type="PhosphoSitePlus" id="Q5TDP6"/>
<dbReference type="BioMuta" id="LGSN"/>
<dbReference type="DMDM" id="67465079"/>
<dbReference type="MassIVE" id="Q5TDP6"/>
<dbReference type="PaxDb" id="9606-ENSP00000359691"/>
<dbReference type="PeptideAtlas" id="Q5TDP6"/>
<dbReference type="ProteomicsDB" id="65029">
    <molecule id="Q5TDP6-1"/>
</dbReference>
<dbReference type="ProteomicsDB" id="65030">
    <molecule id="Q5TDP6-2"/>
</dbReference>
<dbReference type="Antibodypedia" id="49358">
    <property type="antibodies" value="30 antibodies from 13 providers"/>
</dbReference>
<dbReference type="DNASU" id="51557"/>
<dbReference type="Ensembl" id="ENST00000370657.9">
    <molecule id="Q5TDP6-1"/>
    <property type="protein sequence ID" value="ENSP00000359691.4"/>
    <property type="gene ID" value="ENSG00000146166.17"/>
</dbReference>
<dbReference type="Ensembl" id="ENST00000370658.9">
    <molecule id="Q5TDP6-2"/>
    <property type="protein sequence ID" value="ENSP00000359692.5"/>
    <property type="gene ID" value="ENSG00000146166.17"/>
</dbReference>
<dbReference type="Ensembl" id="ENST00000622415.1">
    <molecule id="Q5TDP6-3"/>
    <property type="protein sequence ID" value="ENSP00000479173.1"/>
    <property type="gene ID" value="ENSG00000146166.17"/>
</dbReference>
<dbReference type="GeneID" id="51557"/>
<dbReference type="KEGG" id="hsa:51557"/>
<dbReference type="MANE-Select" id="ENST00000370657.9">
    <property type="protein sequence ID" value="ENSP00000359691.4"/>
    <property type="RefSeq nucleotide sequence ID" value="NM_016571.3"/>
    <property type="RefSeq protein sequence ID" value="NP_057655.2"/>
</dbReference>
<dbReference type="UCSC" id="uc003peh.4">
    <molecule id="Q5TDP6-1"/>
    <property type="organism name" value="human"/>
</dbReference>
<dbReference type="AGR" id="HGNC:21016"/>
<dbReference type="CTD" id="51557"/>
<dbReference type="DisGeNET" id="51557"/>
<dbReference type="GeneCards" id="LGSN"/>
<dbReference type="HGNC" id="HGNC:21016">
    <property type="gene designation" value="LGSN"/>
</dbReference>
<dbReference type="HPA" id="ENSG00000146166">
    <property type="expression patterns" value="Group enriched (kidney, liver, placenta)"/>
</dbReference>
<dbReference type="MIM" id="611470">
    <property type="type" value="gene"/>
</dbReference>
<dbReference type="neXtProt" id="NX_Q5TDP6"/>
<dbReference type="OpenTargets" id="ENSG00000146166"/>
<dbReference type="PharmGKB" id="PA164722103"/>
<dbReference type="VEuPathDB" id="HostDB:ENSG00000146166"/>
<dbReference type="eggNOG" id="KOG0683">
    <property type="taxonomic scope" value="Eukaryota"/>
</dbReference>
<dbReference type="GeneTree" id="ENSGT00390000013639"/>
<dbReference type="HOGENOM" id="CLU_1424525_0_0_1"/>
<dbReference type="InParanoid" id="Q5TDP6"/>
<dbReference type="OMA" id="NIMTFRL"/>
<dbReference type="OrthoDB" id="77835at2759"/>
<dbReference type="PAN-GO" id="Q5TDP6">
    <property type="GO annotations" value="2 GO annotations based on evolutionary models"/>
</dbReference>
<dbReference type="PhylomeDB" id="Q5TDP6"/>
<dbReference type="TreeFam" id="TF331605"/>
<dbReference type="PathwayCommons" id="Q5TDP6"/>
<dbReference type="SignaLink" id="Q5TDP6"/>
<dbReference type="BioGRID-ORCS" id="51557">
    <property type="hits" value="28 hits in 1148 CRISPR screens"/>
</dbReference>
<dbReference type="ChiTaRS" id="LGSN">
    <property type="organism name" value="human"/>
</dbReference>
<dbReference type="GenomeRNAi" id="51557"/>
<dbReference type="Pharos" id="Q5TDP6">
    <property type="development level" value="Tbio"/>
</dbReference>
<dbReference type="PRO" id="PR:Q5TDP6"/>
<dbReference type="Proteomes" id="UP000005640">
    <property type="component" value="Chromosome 6"/>
</dbReference>
<dbReference type="RNAct" id="Q5TDP6">
    <property type="molecule type" value="protein"/>
</dbReference>
<dbReference type="Bgee" id="ENSG00000146166">
    <property type="expression patterns" value="Expressed in buccal mucosa cell and 53 other cell types or tissues"/>
</dbReference>
<dbReference type="ExpressionAtlas" id="Q5TDP6">
    <property type="expression patterns" value="baseline and differential"/>
</dbReference>
<dbReference type="GO" id="GO:0005737">
    <property type="term" value="C:cytoplasm"/>
    <property type="evidence" value="ECO:0000318"/>
    <property type="project" value="GO_Central"/>
</dbReference>
<dbReference type="GO" id="GO:0016020">
    <property type="term" value="C:membrane"/>
    <property type="evidence" value="ECO:0000318"/>
    <property type="project" value="GO_Central"/>
</dbReference>
<dbReference type="GO" id="GO:0005886">
    <property type="term" value="C:plasma membrane"/>
    <property type="evidence" value="ECO:0007669"/>
    <property type="project" value="Ensembl"/>
</dbReference>
<dbReference type="GO" id="GO:0003824">
    <property type="term" value="F:catalytic activity"/>
    <property type="evidence" value="ECO:0007669"/>
    <property type="project" value="InterPro"/>
</dbReference>
<dbReference type="FunFam" id="3.30.590.10:FF:000009">
    <property type="entry name" value="Lengsin, lens protein with glutamine synthetase domain"/>
    <property type="match status" value="1"/>
</dbReference>
<dbReference type="FunFam" id="3.10.20.70:FF:000007">
    <property type="entry name" value="LOW QUALITY PROTEIN: lengsin"/>
    <property type="match status" value="1"/>
</dbReference>
<dbReference type="Gene3D" id="3.10.20.70">
    <property type="entry name" value="Glutamine synthetase, N-terminal domain"/>
    <property type="match status" value="1"/>
</dbReference>
<dbReference type="Gene3D" id="3.30.590.10">
    <property type="entry name" value="Glutamine synthetase/guanido kinase, catalytic domain"/>
    <property type="match status" value="1"/>
</dbReference>
<dbReference type="InterPro" id="IPR008147">
    <property type="entry name" value="Gln_synt_N"/>
</dbReference>
<dbReference type="InterPro" id="IPR036651">
    <property type="entry name" value="Gln_synt_N_sf"/>
</dbReference>
<dbReference type="InterPro" id="IPR014746">
    <property type="entry name" value="Gln_synth/guanido_kin_cat_dom"/>
</dbReference>
<dbReference type="InterPro" id="IPR008146">
    <property type="entry name" value="Gln_synth_cat_dom"/>
</dbReference>
<dbReference type="PANTHER" id="PTHR43407">
    <property type="entry name" value="GLUTAMINE SYNTHETASE"/>
    <property type="match status" value="1"/>
</dbReference>
<dbReference type="PANTHER" id="PTHR43407:SF1">
    <property type="entry name" value="LENGSIN"/>
    <property type="match status" value="1"/>
</dbReference>
<dbReference type="Pfam" id="PF00120">
    <property type="entry name" value="Gln-synt_C"/>
    <property type="match status" value="1"/>
</dbReference>
<dbReference type="SMART" id="SM01230">
    <property type="entry name" value="Gln-synt_C"/>
    <property type="match status" value="1"/>
</dbReference>
<dbReference type="SUPFAM" id="SSF54368">
    <property type="entry name" value="Glutamine synthetase, N-terminal domain"/>
    <property type="match status" value="1"/>
</dbReference>
<dbReference type="SUPFAM" id="SSF55931">
    <property type="entry name" value="Glutamine synthetase/guanido kinase"/>
    <property type="match status" value="1"/>
</dbReference>
<dbReference type="PROSITE" id="PS51986">
    <property type="entry name" value="GS_BETA_GRASP"/>
    <property type="match status" value="1"/>
</dbReference>
<dbReference type="PROSITE" id="PS51987">
    <property type="entry name" value="GS_CATALYTIC"/>
    <property type="match status" value="1"/>
</dbReference>
<keyword id="KW-0025">Alternative splicing</keyword>
<keyword id="KW-1267">Proteomics identification</keyword>
<keyword id="KW-1185">Reference proteome</keyword>
<accession>Q5TDP6</accession>
<accession>A1L421</accession>
<accession>Q0PVN9</accession>
<accession>Q0PVP0</accession>
<accession>Q9NYJ0</accession>
<reference key="1">
    <citation type="journal article" date="2006" name="Biochem. Biophys. Res. Commun.">
        <title>Structural and functional properties of lengsin, a pseudo-glutamine synthetase in the transparent human lens.</title>
        <authorList>
            <person name="Grassi F."/>
            <person name="Moretto N."/>
            <person name="Rivetti C."/>
            <person name="Cellai S."/>
            <person name="Betti M."/>
            <person name="Marquez A.J."/>
            <person name="Maraini G."/>
            <person name="Ottonello S."/>
        </authorList>
    </citation>
    <scope>NUCLEOTIDE SEQUENCE [MRNA] (ISOFORMS 2 AND 3)</scope>
    <scope>SUBUNIT</scope>
    <scope>TISSUE SPECIFICITY</scope>
</reference>
<reference key="2">
    <citation type="journal article" date="2002" name="Mol. Vis.">
        <title>Expressed sequence tag analysis of adult human lens for the NEIBank project: over 2000 non-redundant transcripts, novel genes and splice variants.</title>
        <authorList>
            <person name="Wistow G."/>
            <person name="Bernstein S.L."/>
            <person name="Wyatt M.K."/>
            <person name="Behal A."/>
            <person name="Touchman J.W."/>
            <person name="Bouffard G."/>
            <person name="Smith D."/>
            <person name="Peterson K."/>
        </authorList>
    </citation>
    <scope>NUCLEOTIDE SEQUENCE [LARGE SCALE MRNA] (ISOFORM 1)</scope>
    <scope>TISSUE SPECIFICITY</scope>
    <source>
        <tissue>Lens</tissue>
    </source>
</reference>
<reference key="3">
    <citation type="journal article" date="2003" name="Nature">
        <title>The DNA sequence and analysis of human chromosome 6.</title>
        <authorList>
            <person name="Mungall A.J."/>
            <person name="Palmer S.A."/>
            <person name="Sims S.K."/>
            <person name="Edwards C.A."/>
            <person name="Ashurst J.L."/>
            <person name="Wilming L."/>
            <person name="Jones M.C."/>
            <person name="Horton R."/>
            <person name="Hunt S.E."/>
            <person name="Scott C.E."/>
            <person name="Gilbert J.G.R."/>
            <person name="Clamp M.E."/>
            <person name="Bethel G."/>
            <person name="Milne S."/>
            <person name="Ainscough R."/>
            <person name="Almeida J.P."/>
            <person name="Ambrose K.D."/>
            <person name="Andrews T.D."/>
            <person name="Ashwell R.I.S."/>
            <person name="Babbage A.K."/>
            <person name="Bagguley C.L."/>
            <person name="Bailey J."/>
            <person name="Banerjee R."/>
            <person name="Barker D.J."/>
            <person name="Barlow K.F."/>
            <person name="Bates K."/>
            <person name="Beare D.M."/>
            <person name="Beasley H."/>
            <person name="Beasley O."/>
            <person name="Bird C.P."/>
            <person name="Blakey S.E."/>
            <person name="Bray-Allen S."/>
            <person name="Brook J."/>
            <person name="Brown A.J."/>
            <person name="Brown J.Y."/>
            <person name="Burford D.C."/>
            <person name="Burrill W."/>
            <person name="Burton J."/>
            <person name="Carder C."/>
            <person name="Carter N.P."/>
            <person name="Chapman J.C."/>
            <person name="Clark S.Y."/>
            <person name="Clark G."/>
            <person name="Clee C.M."/>
            <person name="Clegg S."/>
            <person name="Cobley V."/>
            <person name="Collier R.E."/>
            <person name="Collins J.E."/>
            <person name="Colman L.K."/>
            <person name="Corby N.R."/>
            <person name="Coville G.J."/>
            <person name="Culley K.M."/>
            <person name="Dhami P."/>
            <person name="Davies J."/>
            <person name="Dunn M."/>
            <person name="Earthrowl M.E."/>
            <person name="Ellington A.E."/>
            <person name="Evans K.A."/>
            <person name="Faulkner L."/>
            <person name="Francis M.D."/>
            <person name="Frankish A."/>
            <person name="Frankland J."/>
            <person name="French L."/>
            <person name="Garner P."/>
            <person name="Garnett J."/>
            <person name="Ghori M.J."/>
            <person name="Gilby L.M."/>
            <person name="Gillson C.J."/>
            <person name="Glithero R.J."/>
            <person name="Grafham D.V."/>
            <person name="Grant M."/>
            <person name="Gribble S."/>
            <person name="Griffiths C."/>
            <person name="Griffiths M.N.D."/>
            <person name="Hall R."/>
            <person name="Halls K.S."/>
            <person name="Hammond S."/>
            <person name="Harley J.L."/>
            <person name="Hart E.A."/>
            <person name="Heath P.D."/>
            <person name="Heathcott R."/>
            <person name="Holmes S.J."/>
            <person name="Howden P.J."/>
            <person name="Howe K.L."/>
            <person name="Howell G.R."/>
            <person name="Huckle E."/>
            <person name="Humphray S.J."/>
            <person name="Humphries M.D."/>
            <person name="Hunt A.R."/>
            <person name="Johnson C.M."/>
            <person name="Joy A.A."/>
            <person name="Kay M."/>
            <person name="Keenan S.J."/>
            <person name="Kimberley A.M."/>
            <person name="King A."/>
            <person name="Laird G.K."/>
            <person name="Langford C."/>
            <person name="Lawlor S."/>
            <person name="Leongamornlert D.A."/>
            <person name="Leversha M."/>
            <person name="Lloyd C.R."/>
            <person name="Lloyd D.M."/>
            <person name="Loveland J.E."/>
            <person name="Lovell J."/>
            <person name="Martin S."/>
            <person name="Mashreghi-Mohammadi M."/>
            <person name="Maslen G.L."/>
            <person name="Matthews L."/>
            <person name="McCann O.T."/>
            <person name="McLaren S.J."/>
            <person name="McLay K."/>
            <person name="McMurray A."/>
            <person name="Moore M.J.F."/>
            <person name="Mullikin J.C."/>
            <person name="Niblett D."/>
            <person name="Nickerson T."/>
            <person name="Novik K.L."/>
            <person name="Oliver K."/>
            <person name="Overton-Larty E.K."/>
            <person name="Parker A."/>
            <person name="Patel R."/>
            <person name="Pearce A.V."/>
            <person name="Peck A.I."/>
            <person name="Phillimore B.J.C.T."/>
            <person name="Phillips S."/>
            <person name="Plumb R.W."/>
            <person name="Porter K.M."/>
            <person name="Ramsey Y."/>
            <person name="Ranby S.A."/>
            <person name="Rice C.M."/>
            <person name="Ross M.T."/>
            <person name="Searle S.M."/>
            <person name="Sehra H.K."/>
            <person name="Sheridan E."/>
            <person name="Skuce C.D."/>
            <person name="Smith S."/>
            <person name="Smith M."/>
            <person name="Spraggon L."/>
            <person name="Squares S.L."/>
            <person name="Steward C.A."/>
            <person name="Sycamore N."/>
            <person name="Tamlyn-Hall G."/>
            <person name="Tester J."/>
            <person name="Theaker A.J."/>
            <person name="Thomas D.W."/>
            <person name="Thorpe A."/>
            <person name="Tracey A."/>
            <person name="Tromans A."/>
            <person name="Tubby B."/>
            <person name="Wall M."/>
            <person name="Wallis J.M."/>
            <person name="West A.P."/>
            <person name="White S.S."/>
            <person name="Whitehead S.L."/>
            <person name="Whittaker H."/>
            <person name="Wild A."/>
            <person name="Willey D.J."/>
            <person name="Wilmer T.E."/>
            <person name="Wood J.M."/>
            <person name="Wray P.W."/>
            <person name="Wyatt J.C."/>
            <person name="Young L."/>
            <person name="Younger R.M."/>
            <person name="Bentley D.R."/>
            <person name="Coulson A."/>
            <person name="Durbin R.M."/>
            <person name="Hubbard T."/>
            <person name="Sulston J.E."/>
            <person name="Dunham I."/>
            <person name="Rogers J."/>
            <person name="Beck S."/>
        </authorList>
    </citation>
    <scope>NUCLEOTIDE SEQUENCE [LARGE SCALE GENOMIC DNA]</scope>
</reference>
<reference key="4">
    <citation type="submission" date="2005-07" db="EMBL/GenBank/DDBJ databases">
        <authorList>
            <person name="Mural R.J."/>
            <person name="Istrail S."/>
            <person name="Sutton G.G."/>
            <person name="Florea L."/>
            <person name="Halpern A.L."/>
            <person name="Mobarry C.M."/>
            <person name="Lippert R."/>
            <person name="Walenz B."/>
            <person name="Shatkay H."/>
            <person name="Dew I."/>
            <person name="Miller J.R."/>
            <person name="Flanigan M.J."/>
            <person name="Edwards N.J."/>
            <person name="Bolanos R."/>
            <person name="Fasulo D."/>
            <person name="Halldorsson B.V."/>
            <person name="Hannenhalli S."/>
            <person name="Turner R."/>
            <person name="Yooseph S."/>
            <person name="Lu F."/>
            <person name="Nusskern D.R."/>
            <person name="Shue B.C."/>
            <person name="Zheng X.H."/>
            <person name="Zhong F."/>
            <person name="Delcher A.L."/>
            <person name="Huson D.H."/>
            <person name="Kravitz S.A."/>
            <person name="Mouchard L."/>
            <person name="Reinert K."/>
            <person name="Remington K.A."/>
            <person name="Clark A.G."/>
            <person name="Waterman M.S."/>
            <person name="Eichler E.E."/>
            <person name="Adams M.D."/>
            <person name="Hunkapiller M.W."/>
            <person name="Myers E.W."/>
            <person name="Venter J.C."/>
        </authorList>
    </citation>
    <scope>NUCLEOTIDE SEQUENCE [LARGE SCALE GENOMIC DNA]</scope>
</reference>
<reference key="5">
    <citation type="journal article" date="2004" name="Genome Res.">
        <title>The status, quality, and expansion of the NIH full-length cDNA project: the Mammalian Gene Collection (MGC).</title>
        <authorList>
            <consortium name="The MGC Project Team"/>
        </authorList>
    </citation>
    <scope>NUCLEOTIDE SEQUENCE [LARGE SCALE MRNA] (ISOFORM 1)</scope>
</reference>
<protein>
    <recommendedName>
        <fullName>Lengsin</fullName>
    </recommendedName>
    <alternativeName>
        <fullName>Glutamate-ammonia ligase domain-containing protein 1</fullName>
    </alternativeName>
    <alternativeName>
        <fullName>Lens glutamine synthase-like</fullName>
    </alternativeName>
</protein>
<comment type="function">
    <text evidence="1">May act as a component of the cytoskeleton or as a chaperone for the reorganization of intermediate filament proteins during terminal differentiation in the lens. Does not seem to have enzymatic activity (By similarity).</text>
</comment>
<comment type="subunit">
    <text evidence="1">Dodecamer. Interacts with BFSP2 and VIM (By similarity).</text>
</comment>
<comment type="alternative products">
    <event type="alternative splicing"/>
    <isoform>
        <id>Q5TDP6-1</id>
        <name>1</name>
        <name>LGS_v2</name>
        <sequence type="displayed"/>
    </isoform>
    <isoform>
        <id>Q5TDP6-2</id>
        <name>2</name>
        <name>LGS_v1</name>
        <sequence type="described" ref="VSP_036482 VSP_036483"/>
    </isoform>
    <isoform>
        <id>Q5TDP6-3</id>
        <name>3</name>
        <name>LGS_v3</name>
        <sequence type="described" ref="VSP_036480 VSP_036481"/>
    </isoform>
</comment>
<comment type="tissue specificity">
    <text evidence="5 6">Abundantly expressed in lens.</text>
</comment>
<comment type="similarity">
    <text evidence="8">Belongs to the glutamine synthetase family.</text>
</comment>
<name>LGSN_HUMAN</name>